<reference key="1">
    <citation type="submission" date="2007-09" db="EMBL/GenBank/DDBJ databases">
        <title>Complete sequence of chromosome of Serratia proteamaculans 568.</title>
        <authorList>
            <consortium name="US DOE Joint Genome Institute"/>
            <person name="Copeland A."/>
            <person name="Lucas S."/>
            <person name="Lapidus A."/>
            <person name="Barry K."/>
            <person name="Glavina del Rio T."/>
            <person name="Dalin E."/>
            <person name="Tice H."/>
            <person name="Pitluck S."/>
            <person name="Chain P."/>
            <person name="Malfatti S."/>
            <person name="Shin M."/>
            <person name="Vergez L."/>
            <person name="Schmutz J."/>
            <person name="Larimer F."/>
            <person name="Land M."/>
            <person name="Hauser L."/>
            <person name="Kyrpides N."/>
            <person name="Kim E."/>
            <person name="Taghavi S."/>
            <person name="Newman L."/>
            <person name="Vangronsveld J."/>
            <person name="van der Lelie D."/>
            <person name="Richardson P."/>
        </authorList>
    </citation>
    <scope>NUCLEOTIDE SEQUENCE [LARGE SCALE GENOMIC DNA]</scope>
    <source>
        <strain>568</strain>
    </source>
</reference>
<comment type="function">
    <text evidence="1">F(1)F(0) ATP synthase produces ATP from ADP in the presence of a proton or sodium gradient. F-type ATPases consist of two structural domains, F(1) containing the extramembraneous catalytic core and F(0) containing the membrane proton channel, linked together by a central stalk and a peripheral stalk. During catalysis, ATP synthesis in the catalytic domain of F(1) is coupled via a rotary mechanism of the central stalk subunits to proton translocation.</text>
</comment>
<comment type="function">
    <text evidence="1">This protein is part of the stalk that links CF(0) to CF(1). It either transmits conformational changes from CF(0) to CF(1) or is implicated in proton conduction.</text>
</comment>
<comment type="subunit">
    <text evidence="1">F-type ATPases have 2 components, F(1) - the catalytic core - and F(0) - the membrane proton channel. F(1) has five subunits: alpha(3), beta(3), gamma(1), delta(1), epsilon(1). F(0) has three main subunits: a(1), b(2) and c(10-14). The alpha and beta chains form an alternating ring which encloses part of the gamma chain. F(1) is attached to F(0) by a central stalk formed by the gamma and epsilon chains, while a peripheral stalk is formed by the delta and b chains.</text>
</comment>
<comment type="subcellular location">
    <subcellularLocation>
        <location evidence="1">Cell inner membrane</location>
        <topology evidence="1">Peripheral membrane protein</topology>
    </subcellularLocation>
</comment>
<comment type="similarity">
    <text evidence="1">Belongs to the ATPase delta chain family.</text>
</comment>
<keyword id="KW-0066">ATP synthesis</keyword>
<keyword id="KW-0997">Cell inner membrane</keyword>
<keyword id="KW-1003">Cell membrane</keyword>
<keyword id="KW-0139">CF(1)</keyword>
<keyword id="KW-0375">Hydrogen ion transport</keyword>
<keyword id="KW-0406">Ion transport</keyword>
<keyword id="KW-0472">Membrane</keyword>
<keyword id="KW-0813">Transport</keyword>
<gene>
    <name evidence="1" type="primary">atpH</name>
    <name type="ordered locus">Spro_0005</name>
</gene>
<proteinExistence type="inferred from homology"/>
<protein>
    <recommendedName>
        <fullName evidence="1">ATP synthase subunit delta</fullName>
    </recommendedName>
    <alternativeName>
        <fullName evidence="1">ATP synthase F(1) sector subunit delta</fullName>
    </alternativeName>
    <alternativeName>
        <fullName evidence="1">F-type ATPase subunit delta</fullName>
        <shortName evidence="1">F-ATPase subunit delta</shortName>
    </alternativeName>
</protein>
<feature type="chain" id="PRO_1000184788" description="ATP synthase subunit delta">
    <location>
        <begin position="1"/>
        <end position="177"/>
    </location>
</feature>
<name>ATPD_SERP5</name>
<sequence>MSEFVTVARPYAKAAFDFAVEHQSLDRWQDMLAFAADVTRNEQISELLAGAVAPETLSRTFIAVCGEQLDEHGQNFIRVMAENGRLLVLPAVLQQFIELRALLESTVEVEVLSASALNDKQLANIAAAMEKRLSRKVKLNCKIDKSVLAGVIIRAGDMVIDGSVRGRLERLTDVLQS</sequence>
<dbReference type="EMBL" id="CP000826">
    <property type="protein sequence ID" value="ABV39115.1"/>
    <property type="molecule type" value="Genomic_DNA"/>
</dbReference>
<dbReference type="SMR" id="A8G7M5"/>
<dbReference type="STRING" id="399741.Spro_0005"/>
<dbReference type="KEGG" id="spe:Spro_0005"/>
<dbReference type="eggNOG" id="COG0712">
    <property type="taxonomic scope" value="Bacteria"/>
</dbReference>
<dbReference type="HOGENOM" id="CLU_085114_3_0_6"/>
<dbReference type="OrthoDB" id="9816221at2"/>
<dbReference type="GO" id="GO:0005886">
    <property type="term" value="C:plasma membrane"/>
    <property type="evidence" value="ECO:0007669"/>
    <property type="project" value="UniProtKB-SubCell"/>
</dbReference>
<dbReference type="GO" id="GO:0045259">
    <property type="term" value="C:proton-transporting ATP synthase complex"/>
    <property type="evidence" value="ECO:0007669"/>
    <property type="project" value="UniProtKB-KW"/>
</dbReference>
<dbReference type="GO" id="GO:0046933">
    <property type="term" value="F:proton-transporting ATP synthase activity, rotational mechanism"/>
    <property type="evidence" value="ECO:0007669"/>
    <property type="project" value="UniProtKB-UniRule"/>
</dbReference>
<dbReference type="FunFam" id="1.10.520.20:FF:000001">
    <property type="entry name" value="ATP synthase subunit delta"/>
    <property type="match status" value="1"/>
</dbReference>
<dbReference type="Gene3D" id="1.10.520.20">
    <property type="entry name" value="N-terminal domain of the delta subunit of the F1F0-ATP synthase"/>
    <property type="match status" value="1"/>
</dbReference>
<dbReference type="HAMAP" id="MF_01416">
    <property type="entry name" value="ATP_synth_delta_bact"/>
    <property type="match status" value="1"/>
</dbReference>
<dbReference type="InterPro" id="IPR026015">
    <property type="entry name" value="ATP_synth_OSCP/delta_N_sf"/>
</dbReference>
<dbReference type="InterPro" id="IPR020781">
    <property type="entry name" value="ATPase_OSCP/d_CS"/>
</dbReference>
<dbReference type="InterPro" id="IPR000711">
    <property type="entry name" value="ATPase_OSCP/dsu"/>
</dbReference>
<dbReference type="NCBIfam" id="TIGR01145">
    <property type="entry name" value="ATP_synt_delta"/>
    <property type="match status" value="1"/>
</dbReference>
<dbReference type="NCBIfam" id="NF004402">
    <property type="entry name" value="PRK05758.2-2"/>
    <property type="match status" value="1"/>
</dbReference>
<dbReference type="NCBIfam" id="NF004404">
    <property type="entry name" value="PRK05758.2-5"/>
    <property type="match status" value="1"/>
</dbReference>
<dbReference type="PANTHER" id="PTHR11910">
    <property type="entry name" value="ATP SYNTHASE DELTA CHAIN"/>
    <property type="match status" value="1"/>
</dbReference>
<dbReference type="Pfam" id="PF00213">
    <property type="entry name" value="OSCP"/>
    <property type="match status" value="1"/>
</dbReference>
<dbReference type="PRINTS" id="PR00125">
    <property type="entry name" value="ATPASEDELTA"/>
</dbReference>
<dbReference type="SUPFAM" id="SSF47928">
    <property type="entry name" value="N-terminal domain of the delta subunit of the F1F0-ATP synthase"/>
    <property type="match status" value="1"/>
</dbReference>
<dbReference type="PROSITE" id="PS00389">
    <property type="entry name" value="ATPASE_DELTA"/>
    <property type="match status" value="1"/>
</dbReference>
<organism>
    <name type="scientific">Serratia proteamaculans (strain 568)</name>
    <dbReference type="NCBI Taxonomy" id="399741"/>
    <lineage>
        <taxon>Bacteria</taxon>
        <taxon>Pseudomonadati</taxon>
        <taxon>Pseudomonadota</taxon>
        <taxon>Gammaproteobacteria</taxon>
        <taxon>Enterobacterales</taxon>
        <taxon>Yersiniaceae</taxon>
        <taxon>Serratia</taxon>
    </lineage>
</organism>
<accession>A8G7M5</accession>
<evidence type="ECO:0000255" key="1">
    <source>
        <dbReference type="HAMAP-Rule" id="MF_01416"/>
    </source>
</evidence>